<dbReference type="EMBL" id="DP000086">
    <property type="protein sequence ID" value="ABB47484.1"/>
    <property type="molecule type" value="Genomic_DNA"/>
</dbReference>
<dbReference type="EMBL" id="AP008216">
    <property type="protein sequence ID" value="BAF26412.2"/>
    <property type="status" value="ALT_SEQ"/>
    <property type="molecule type" value="Genomic_DNA"/>
</dbReference>
<dbReference type="EMBL" id="AP014966">
    <property type="protein sequence ID" value="BAT10651.1"/>
    <property type="molecule type" value="Genomic_DNA"/>
</dbReference>
<dbReference type="EMBL" id="AK065782">
    <property type="protein sequence ID" value="BAG89677.1"/>
    <property type="molecule type" value="mRNA"/>
</dbReference>
<dbReference type="RefSeq" id="XP_015612802.1">
    <property type="nucleotide sequence ID" value="XM_015757316.1"/>
</dbReference>
<dbReference type="SMR" id="Q338P8"/>
<dbReference type="FunCoup" id="Q338P8">
    <property type="interactions" value="867"/>
</dbReference>
<dbReference type="STRING" id="39947.Q338P8"/>
<dbReference type="PaxDb" id="39947-Q338P8"/>
<dbReference type="EnsemblPlants" id="Os10t0389000-01">
    <property type="protein sequence ID" value="Os10t0389000-01"/>
    <property type="gene ID" value="Os10g0389000"/>
</dbReference>
<dbReference type="Gramene" id="Os10t0389000-01">
    <property type="protein sequence ID" value="Os10t0389000-01"/>
    <property type="gene ID" value="Os10g0389000"/>
</dbReference>
<dbReference type="KEGG" id="dosa:Os10g0389000"/>
<dbReference type="eggNOG" id="KOG0028">
    <property type="taxonomic scope" value="Eukaryota"/>
</dbReference>
<dbReference type="HOGENOM" id="CLU_061288_18_0_1"/>
<dbReference type="InParanoid" id="Q338P8"/>
<dbReference type="OMA" id="CIEAREF"/>
<dbReference type="OrthoDB" id="343296at2759"/>
<dbReference type="Proteomes" id="UP000000763">
    <property type="component" value="Chromosome 10"/>
</dbReference>
<dbReference type="Proteomes" id="UP000059680">
    <property type="component" value="Chromosome 10"/>
</dbReference>
<dbReference type="GO" id="GO:0005814">
    <property type="term" value="C:centriole"/>
    <property type="evidence" value="ECO:0000318"/>
    <property type="project" value="GO_Central"/>
</dbReference>
<dbReference type="GO" id="GO:0005634">
    <property type="term" value="C:nucleus"/>
    <property type="evidence" value="ECO:0000318"/>
    <property type="project" value="GO_Central"/>
</dbReference>
<dbReference type="GO" id="GO:0005509">
    <property type="term" value="F:calcium ion binding"/>
    <property type="evidence" value="ECO:0000318"/>
    <property type="project" value="GO_Central"/>
</dbReference>
<dbReference type="GO" id="GO:0000226">
    <property type="term" value="P:microtubule cytoskeleton organization"/>
    <property type="evidence" value="ECO:0000318"/>
    <property type="project" value="GO_Central"/>
</dbReference>
<dbReference type="CDD" id="cd00051">
    <property type="entry name" value="EFh"/>
    <property type="match status" value="1"/>
</dbReference>
<dbReference type="CDD" id="cd15898">
    <property type="entry name" value="EFh_PI-PLC"/>
    <property type="match status" value="1"/>
</dbReference>
<dbReference type="FunFam" id="1.10.238.10:FF:000268">
    <property type="entry name" value="Centrin 2"/>
    <property type="match status" value="1"/>
</dbReference>
<dbReference type="FunFam" id="1.10.238.10:FF:000256">
    <property type="entry name" value="probable calcium-binding protein CML20"/>
    <property type="match status" value="1"/>
</dbReference>
<dbReference type="Gene3D" id="1.10.238.10">
    <property type="entry name" value="EF-hand"/>
    <property type="match status" value="2"/>
</dbReference>
<dbReference type="InterPro" id="IPR003299">
    <property type="entry name" value="Calflagin-bd"/>
</dbReference>
<dbReference type="InterPro" id="IPR050230">
    <property type="entry name" value="CALM/Myosin/TropC-like"/>
</dbReference>
<dbReference type="InterPro" id="IPR011992">
    <property type="entry name" value="EF-hand-dom_pair"/>
</dbReference>
<dbReference type="InterPro" id="IPR018247">
    <property type="entry name" value="EF_Hand_1_Ca_BS"/>
</dbReference>
<dbReference type="InterPro" id="IPR002048">
    <property type="entry name" value="EF_hand_dom"/>
</dbReference>
<dbReference type="PANTHER" id="PTHR23048:SF59">
    <property type="entry name" value="EF-HAND SUPERFAMILY PROTEIN"/>
    <property type="match status" value="1"/>
</dbReference>
<dbReference type="PANTHER" id="PTHR23048">
    <property type="entry name" value="MYOSIN LIGHT CHAIN 1, 3"/>
    <property type="match status" value="1"/>
</dbReference>
<dbReference type="Pfam" id="PF13499">
    <property type="entry name" value="EF-hand_7"/>
    <property type="match status" value="2"/>
</dbReference>
<dbReference type="PRINTS" id="PR01362">
    <property type="entry name" value="CALFLAGIN"/>
</dbReference>
<dbReference type="SMART" id="SM00054">
    <property type="entry name" value="EFh"/>
    <property type="match status" value="4"/>
</dbReference>
<dbReference type="SUPFAM" id="SSF47473">
    <property type="entry name" value="EF-hand"/>
    <property type="match status" value="1"/>
</dbReference>
<dbReference type="PROSITE" id="PS00018">
    <property type="entry name" value="EF_HAND_1"/>
    <property type="match status" value="4"/>
</dbReference>
<dbReference type="PROSITE" id="PS50222">
    <property type="entry name" value="EF_HAND_2"/>
    <property type="match status" value="4"/>
</dbReference>
<organism>
    <name type="scientific">Oryza sativa subsp. japonica</name>
    <name type="common">Rice</name>
    <dbReference type="NCBI Taxonomy" id="39947"/>
    <lineage>
        <taxon>Eukaryota</taxon>
        <taxon>Viridiplantae</taxon>
        <taxon>Streptophyta</taxon>
        <taxon>Embryophyta</taxon>
        <taxon>Tracheophyta</taxon>
        <taxon>Spermatophyta</taxon>
        <taxon>Magnoliopsida</taxon>
        <taxon>Liliopsida</taxon>
        <taxon>Poales</taxon>
        <taxon>Poaceae</taxon>
        <taxon>BOP clade</taxon>
        <taxon>Oryzoideae</taxon>
        <taxon>Oryzeae</taxon>
        <taxon>Oryzinae</taxon>
        <taxon>Oryza</taxon>
        <taxon>Oryza sativa</taxon>
    </lineage>
</organism>
<feature type="chain" id="PRO_0000338423" description="Probable calcium-binding protein CML8">
    <location>
        <begin position="1"/>
        <end position="191"/>
    </location>
</feature>
<feature type="domain" description="EF-hand 1" evidence="2">
    <location>
        <begin position="43"/>
        <end position="78"/>
    </location>
</feature>
<feature type="domain" description="EF-hand 2" evidence="2">
    <location>
        <begin position="79"/>
        <end position="114"/>
    </location>
</feature>
<feature type="domain" description="EF-hand 3" evidence="2">
    <location>
        <begin position="116"/>
        <end position="151"/>
    </location>
</feature>
<feature type="domain" description="EF-hand 4" evidence="2">
    <location>
        <begin position="152"/>
        <end position="187"/>
    </location>
</feature>
<feature type="region of interest" description="Disordered" evidence="3">
    <location>
        <begin position="1"/>
        <end position="41"/>
    </location>
</feature>
<feature type="compositionally biased region" description="Gly residues" evidence="3">
    <location>
        <begin position="17"/>
        <end position="27"/>
    </location>
</feature>
<feature type="binding site" evidence="2">
    <location>
        <position position="56"/>
    </location>
    <ligand>
        <name>Ca(2+)</name>
        <dbReference type="ChEBI" id="CHEBI:29108"/>
        <label>1</label>
    </ligand>
</feature>
<feature type="binding site" evidence="2">
    <location>
        <position position="58"/>
    </location>
    <ligand>
        <name>Ca(2+)</name>
        <dbReference type="ChEBI" id="CHEBI:29108"/>
        <label>1</label>
    </ligand>
</feature>
<feature type="binding site" evidence="2">
    <location>
        <position position="60"/>
    </location>
    <ligand>
        <name>Ca(2+)</name>
        <dbReference type="ChEBI" id="CHEBI:29108"/>
        <label>1</label>
    </ligand>
</feature>
<feature type="binding site" evidence="2">
    <location>
        <position position="62"/>
    </location>
    <ligand>
        <name>Ca(2+)</name>
        <dbReference type="ChEBI" id="CHEBI:29108"/>
        <label>1</label>
    </ligand>
</feature>
<feature type="binding site" evidence="2">
    <location>
        <position position="67"/>
    </location>
    <ligand>
        <name>Ca(2+)</name>
        <dbReference type="ChEBI" id="CHEBI:29108"/>
        <label>1</label>
    </ligand>
</feature>
<feature type="binding site" evidence="2">
    <location>
        <position position="92"/>
    </location>
    <ligand>
        <name>Ca(2+)</name>
        <dbReference type="ChEBI" id="CHEBI:29108"/>
        <label>2</label>
    </ligand>
</feature>
<feature type="binding site" evidence="2">
    <location>
        <position position="94"/>
    </location>
    <ligand>
        <name>Ca(2+)</name>
        <dbReference type="ChEBI" id="CHEBI:29108"/>
        <label>2</label>
    </ligand>
</feature>
<feature type="binding site" evidence="2">
    <location>
        <position position="96"/>
    </location>
    <ligand>
        <name>Ca(2+)</name>
        <dbReference type="ChEBI" id="CHEBI:29108"/>
        <label>2</label>
    </ligand>
</feature>
<feature type="binding site" evidence="2">
    <location>
        <position position="98"/>
    </location>
    <ligand>
        <name>Ca(2+)</name>
        <dbReference type="ChEBI" id="CHEBI:29108"/>
        <label>2</label>
    </ligand>
</feature>
<feature type="binding site" evidence="2">
    <location>
        <position position="103"/>
    </location>
    <ligand>
        <name>Ca(2+)</name>
        <dbReference type="ChEBI" id="CHEBI:29108"/>
        <label>2</label>
    </ligand>
</feature>
<feature type="binding site" evidence="2">
    <location>
        <position position="129"/>
    </location>
    <ligand>
        <name>Ca(2+)</name>
        <dbReference type="ChEBI" id="CHEBI:29108"/>
        <label>3</label>
    </ligand>
</feature>
<feature type="binding site" evidence="2">
    <location>
        <position position="131"/>
    </location>
    <ligand>
        <name>Ca(2+)</name>
        <dbReference type="ChEBI" id="CHEBI:29108"/>
        <label>3</label>
    </ligand>
</feature>
<feature type="binding site" evidence="2">
    <location>
        <position position="133"/>
    </location>
    <ligand>
        <name>Ca(2+)</name>
        <dbReference type="ChEBI" id="CHEBI:29108"/>
        <label>3</label>
    </ligand>
</feature>
<feature type="binding site" evidence="2">
    <location>
        <position position="135"/>
    </location>
    <ligand>
        <name>Ca(2+)</name>
        <dbReference type="ChEBI" id="CHEBI:29108"/>
        <label>3</label>
    </ligand>
</feature>
<feature type="binding site" evidence="2">
    <location>
        <position position="140"/>
    </location>
    <ligand>
        <name>Ca(2+)</name>
        <dbReference type="ChEBI" id="CHEBI:29108"/>
        <label>3</label>
    </ligand>
</feature>
<feature type="binding site" evidence="2">
    <location>
        <position position="165"/>
    </location>
    <ligand>
        <name>Ca(2+)</name>
        <dbReference type="ChEBI" id="CHEBI:29108"/>
        <label>4</label>
    </ligand>
</feature>
<feature type="binding site" evidence="2">
    <location>
        <position position="167"/>
    </location>
    <ligand>
        <name>Ca(2+)</name>
        <dbReference type="ChEBI" id="CHEBI:29108"/>
        <label>4</label>
    </ligand>
</feature>
<feature type="binding site" evidence="2">
    <location>
        <position position="169"/>
    </location>
    <ligand>
        <name>Ca(2+)</name>
        <dbReference type="ChEBI" id="CHEBI:29108"/>
        <label>4</label>
    </ligand>
</feature>
<feature type="binding site" evidence="2">
    <location>
        <position position="171"/>
    </location>
    <ligand>
        <name>Ca(2+)</name>
        <dbReference type="ChEBI" id="CHEBI:29108"/>
        <label>4</label>
    </ligand>
</feature>
<feature type="binding site" evidence="2">
    <location>
        <position position="176"/>
    </location>
    <ligand>
        <name>Ca(2+)</name>
        <dbReference type="ChEBI" id="CHEBI:29108"/>
        <label>4</label>
    </ligand>
</feature>
<accession>Q338P8</accession>
<accession>A0A0P0XTM3</accession>
<accession>B7EBD0</accession>
<reference key="1">
    <citation type="journal article" date="2003" name="Science">
        <title>In-depth view of structure, activity, and evolution of rice chromosome 10.</title>
        <authorList>
            <person name="Yu Y."/>
            <person name="Rambo T."/>
            <person name="Currie J."/>
            <person name="Saski C."/>
            <person name="Kim H.-R."/>
            <person name="Collura K."/>
            <person name="Thompson S."/>
            <person name="Simmons J."/>
            <person name="Yang T.-J."/>
            <person name="Nah G."/>
            <person name="Patel A.J."/>
            <person name="Thurmond S."/>
            <person name="Henry D."/>
            <person name="Oates R."/>
            <person name="Palmer M."/>
            <person name="Pries G."/>
            <person name="Gibson J."/>
            <person name="Anderson H."/>
            <person name="Paradkar M."/>
            <person name="Crane L."/>
            <person name="Dale J."/>
            <person name="Carver M.B."/>
            <person name="Wood T."/>
            <person name="Frisch D."/>
            <person name="Engler F."/>
            <person name="Soderlund C."/>
            <person name="Palmer L.E."/>
            <person name="Teytelman L."/>
            <person name="Nascimento L."/>
            <person name="De la Bastide M."/>
            <person name="Spiegel L."/>
            <person name="Ware D."/>
            <person name="O'Shaughnessy A."/>
            <person name="Dike S."/>
            <person name="Dedhia N."/>
            <person name="Preston R."/>
            <person name="Huang E."/>
            <person name="Ferraro K."/>
            <person name="Kuit K."/>
            <person name="Miller B."/>
            <person name="Zutavern T."/>
            <person name="Katzenberger F."/>
            <person name="Muller S."/>
            <person name="Balija V."/>
            <person name="Martienssen R.A."/>
            <person name="Stein L."/>
            <person name="Minx P."/>
            <person name="Johnson D."/>
            <person name="Cordum H."/>
            <person name="Mardis E."/>
            <person name="Cheng Z."/>
            <person name="Jiang J."/>
            <person name="Wilson R."/>
            <person name="McCombie W.R."/>
            <person name="Wing R.A."/>
            <person name="Yuan Q."/>
            <person name="Ouyang S."/>
            <person name="Liu J."/>
            <person name="Jones K.M."/>
            <person name="Gansberger K."/>
            <person name="Moffat K."/>
            <person name="Hill J."/>
            <person name="Tsitrin T."/>
            <person name="Overton L."/>
            <person name="Bera J."/>
            <person name="Kim M."/>
            <person name="Jin S."/>
            <person name="Tallon L."/>
            <person name="Ciecko A."/>
            <person name="Pai G."/>
            <person name="Van Aken S."/>
            <person name="Utterback T."/>
            <person name="Reidmuller S."/>
            <person name="Bormann J."/>
            <person name="Feldblyum T."/>
            <person name="Hsiao J."/>
            <person name="Zismann V."/>
            <person name="Blunt S."/>
            <person name="de Vazeille A.R."/>
            <person name="Shaffer T."/>
            <person name="Koo H."/>
            <person name="Suh B."/>
            <person name="Yang Q."/>
            <person name="Haas B."/>
            <person name="Peterson J."/>
            <person name="Pertea M."/>
            <person name="Volfovsky N."/>
            <person name="Wortman J."/>
            <person name="White O."/>
            <person name="Salzberg S.L."/>
            <person name="Fraser C.M."/>
            <person name="Buell C.R."/>
            <person name="Messing J."/>
            <person name="Song R."/>
            <person name="Fuks G."/>
            <person name="Llaca V."/>
            <person name="Kovchak S."/>
            <person name="Young S."/>
            <person name="Bowers J.E."/>
            <person name="Paterson A.H."/>
            <person name="Johns M.A."/>
            <person name="Mao L."/>
            <person name="Pan H."/>
            <person name="Dean R.A."/>
        </authorList>
    </citation>
    <scope>NUCLEOTIDE SEQUENCE [LARGE SCALE GENOMIC DNA]</scope>
    <source>
        <strain>cv. Nipponbare</strain>
    </source>
</reference>
<reference key="2">
    <citation type="journal article" date="2005" name="Nature">
        <title>The map-based sequence of the rice genome.</title>
        <authorList>
            <consortium name="International rice genome sequencing project (IRGSP)"/>
        </authorList>
    </citation>
    <scope>NUCLEOTIDE SEQUENCE [LARGE SCALE GENOMIC DNA]</scope>
    <source>
        <strain>cv. Nipponbare</strain>
    </source>
</reference>
<reference key="3">
    <citation type="journal article" date="2008" name="Nucleic Acids Res.">
        <title>The rice annotation project database (RAP-DB): 2008 update.</title>
        <authorList>
            <consortium name="The rice annotation project (RAP)"/>
        </authorList>
    </citation>
    <scope>GENOME REANNOTATION</scope>
    <source>
        <strain>cv. Nipponbare</strain>
    </source>
</reference>
<reference key="4">
    <citation type="journal article" date="2013" name="Rice">
        <title>Improvement of the Oryza sativa Nipponbare reference genome using next generation sequence and optical map data.</title>
        <authorList>
            <person name="Kawahara Y."/>
            <person name="de la Bastide M."/>
            <person name="Hamilton J.P."/>
            <person name="Kanamori H."/>
            <person name="McCombie W.R."/>
            <person name="Ouyang S."/>
            <person name="Schwartz D.C."/>
            <person name="Tanaka T."/>
            <person name="Wu J."/>
            <person name="Zhou S."/>
            <person name="Childs K.L."/>
            <person name="Davidson R.M."/>
            <person name="Lin H."/>
            <person name="Quesada-Ocampo L."/>
            <person name="Vaillancourt B."/>
            <person name="Sakai H."/>
            <person name="Lee S.S."/>
            <person name="Kim J."/>
            <person name="Numa H."/>
            <person name="Itoh T."/>
            <person name="Buell C.R."/>
            <person name="Matsumoto T."/>
        </authorList>
    </citation>
    <scope>GENOME REANNOTATION</scope>
    <source>
        <strain>cv. Nipponbare</strain>
    </source>
</reference>
<reference key="5">
    <citation type="journal article" date="2003" name="Science">
        <title>Collection, mapping, and annotation of over 28,000 cDNA clones from japonica rice.</title>
        <authorList>
            <consortium name="The rice full-length cDNA consortium"/>
        </authorList>
    </citation>
    <scope>NUCLEOTIDE SEQUENCE [LARGE SCALE MRNA]</scope>
    <source>
        <strain>cv. Nipponbare</strain>
    </source>
</reference>
<reference key="6">
    <citation type="journal article" date="2007" name="BMC Plant Biol.">
        <title>Genome-wide identification and analyses of the rice calmodulin and related potential calcium sensor proteins.</title>
        <authorList>
            <person name="Boonburapong B."/>
            <person name="Buaboocha T."/>
        </authorList>
    </citation>
    <scope>GENE FAMILY</scope>
    <scope>NOMENCLATURE</scope>
</reference>
<comment type="function">
    <text evidence="1">Potential calcium sensor.</text>
</comment>
<comment type="caution">
    <text evidence="4">Although assigned as a calmodulin family member by PubMed:17263873, it only contains EF-hand domains.</text>
</comment>
<comment type="sequence caution" evidence="4">
    <conflict type="erroneous gene model prediction">
        <sequence resource="EMBL-CDS" id="BAF26412"/>
    </conflict>
</comment>
<sequence length="191" mass="21315">MASKYRGYYHDEASSAAGGGGGGGGGDGYRREKQVRKKRLTAQKRKEIKEAFDLFDTDGSGTIDPKELNVAMRALGFEMTPEQIHQMIAEVDKDGSGTIDFDEFVHMMTDKMGERDAREELNKAFKIIDKDNNGKISDVDIQRLAIETGEPFTLDEVREMIEAADENGDGEVDHEEFLKMMKRIGFGAGFF</sequence>
<proteinExistence type="evidence at transcript level"/>
<protein>
    <recommendedName>
        <fullName>Probable calcium-binding protein CML8</fullName>
    </recommendedName>
    <alternativeName>
        <fullName>Calmodulin-like protein 8</fullName>
    </alternativeName>
</protein>
<name>CML8_ORYSJ</name>
<keyword id="KW-0106">Calcium</keyword>
<keyword id="KW-0479">Metal-binding</keyword>
<keyword id="KW-1185">Reference proteome</keyword>
<keyword id="KW-0677">Repeat</keyword>
<evidence type="ECO:0000250" key="1"/>
<evidence type="ECO:0000255" key="2">
    <source>
        <dbReference type="PROSITE-ProRule" id="PRU00448"/>
    </source>
</evidence>
<evidence type="ECO:0000256" key="3">
    <source>
        <dbReference type="SAM" id="MobiDB-lite"/>
    </source>
</evidence>
<evidence type="ECO:0000305" key="4"/>
<gene>
    <name type="primary">CML8</name>
    <name type="ordered locus">Os10g0389000</name>
    <name type="ordered locus">LOC_Os10g25010</name>
</gene>